<geneLocation type="mitochondrion"/>
<protein>
    <recommendedName>
        <fullName>NADH-ubiquinone oxidoreductase chain 6</fullName>
        <ecNumber evidence="1">7.1.1.2</ecNumber>
    </recommendedName>
    <alternativeName>
        <fullName>NADH dehydrogenase subunit 6</fullName>
    </alternativeName>
</protein>
<accession>Q34573</accession>
<proteinExistence type="inferred from homology"/>
<comment type="function">
    <text evidence="1">Core subunit of the mitochondrial membrane respiratory chain NADH dehydrogenase (Complex I) which catalyzes electron transfer from NADH through the respiratory chain, using ubiquinone as an electron acceptor. Essential for the catalytic activity and assembly of complex I.</text>
</comment>
<comment type="catalytic activity">
    <reaction evidence="1">
        <text>a ubiquinone + NADH + 5 H(+)(in) = a ubiquinol + NAD(+) + 4 H(+)(out)</text>
        <dbReference type="Rhea" id="RHEA:29091"/>
        <dbReference type="Rhea" id="RHEA-COMP:9565"/>
        <dbReference type="Rhea" id="RHEA-COMP:9566"/>
        <dbReference type="ChEBI" id="CHEBI:15378"/>
        <dbReference type="ChEBI" id="CHEBI:16389"/>
        <dbReference type="ChEBI" id="CHEBI:17976"/>
        <dbReference type="ChEBI" id="CHEBI:57540"/>
        <dbReference type="ChEBI" id="CHEBI:57945"/>
        <dbReference type="EC" id="7.1.1.2"/>
    </reaction>
</comment>
<comment type="subunit">
    <text evidence="2">Core subunit of respiratory chain NADH dehydrogenase (Complex I) which is composed of 45 different subunits.</text>
</comment>
<comment type="subcellular location">
    <subcellularLocation>
        <location evidence="2">Mitochondrion inner membrane</location>
        <topology evidence="3">Multi-pass membrane protein</topology>
    </subcellularLocation>
</comment>
<comment type="similarity">
    <text evidence="4">Belongs to the complex I subunit 6 family.</text>
</comment>
<sequence length="174" mass="18503">MTYVLFLLSVGLVMGFVGFSSKPSPIYGGLVLIVSGVVGCAIILNCGGGYMGLMVFLIYLGGMMVVFGYTTAMAIGEYPEAWGSGVEVLVSVLVGLAMEVGLVLWVKEYDGVVVVVNFNNVGSWMIYEGEGSGLIREDPIGAGALYDYGRWLVVVTGWTLFVGVYIVIEIARGN</sequence>
<dbReference type="EC" id="7.1.1.2" evidence="1"/>
<dbReference type="EMBL" id="D38114">
    <property type="protein sequence ID" value="BAA07307.1"/>
    <property type="molecule type" value="Genomic_DNA"/>
</dbReference>
<dbReference type="PIR" id="C59154">
    <property type="entry name" value="C59154"/>
</dbReference>
<dbReference type="PIR" id="T14027">
    <property type="entry name" value="T14027"/>
</dbReference>
<dbReference type="RefSeq" id="NP_008223.1">
    <property type="nucleotide sequence ID" value="NC_001645.1"/>
</dbReference>
<dbReference type="SMR" id="Q34573"/>
<dbReference type="FunCoup" id="Q34573">
    <property type="interactions" value="329"/>
</dbReference>
<dbReference type="STRING" id="9593.ENSGGOP00000028201"/>
<dbReference type="GeneID" id="807888"/>
<dbReference type="CTD" id="4541"/>
<dbReference type="eggNOG" id="ENOG502S2Q2">
    <property type="taxonomic scope" value="Eukaryota"/>
</dbReference>
<dbReference type="InParanoid" id="Q34573"/>
<dbReference type="Proteomes" id="UP000001519">
    <property type="component" value="Mitochondrion"/>
</dbReference>
<dbReference type="GO" id="GO:0005743">
    <property type="term" value="C:mitochondrial inner membrane"/>
    <property type="evidence" value="ECO:0000250"/>
    <property type="project" value="UniProtKB"/>
</dbReference>
<dbReference type="GO" id="GO:0005739">
    <property type="term" value="C:mitochondrion"/>
    <property type="evidence" value="ECO:0000318"/>
    <property type="project" value="GO_Central"/>
</dbReference>
<dbReference type="GO" id="GO:0008137">
    <property type="term" value="F:NADH dehydrogenase (ubiquinone) activity"/>
    <property type="evidence" value="ECO:0000250"/>
    <property type="project" value="UniProtKB"/>
</dbReference>
<dbReference type="GO" id="GO:0006120">
    <property type="term" value="P:mitochondrial electron transport, NADH to ubiquinone"/>
    <property type="evidence" value="ECO:0000250"/>
    <property type="project" value="UniProtKB"/>
</dbReference>
<dbReference type="GO" id="GO:0032981">
    <property type="term" value="P:mitochondrial respiratory chain complex I assembly"/>
    <property type="evidence" value="ECO:0000250"/>
    <property type="project" value="UniProtKB"/>
</dbReference>
<dbReference type="InterPro" id="IPR050269">
    <property type="entry name" value="ComplexI_Subunit6"/>
</dbReference>
<dbReference type="InterPro" id="IPR001457">
    <property type="entry name" value="NADH_UbQ/plastoQ_OxRdtase_su6"/>
</dbReference>
<dbReference type="PANTHER" id="PTHR11435">
    <property type="entry name" value="NADH UBIQUINONE OXIDOREDUCTASE SUBUNIT ND6"/>
    <property type="match status" value="1"/>
</dbReference>
<dbReference type="PANTHER" id="PTHR11435:SF1">
    <property type="entry name" value="NADH-UBIQUINONE OXIDOREDUCTASE CHAIN 6"/>
    <property type="match status" value="1"/>
</dbReference>
<dbReference type="Pfam" id="PF00499">
    <property type="entry name" value="Oxidored_q3"/>
    <property type="match status" value="1"/>
</dbReference>
<gene>
    <name type="primary">MT-ND6</name>
    <name type="synonym">MTND6</name>
    <name type="synonym">NADH6</name>
    <name type="synonym">ND6</name>
</gene>
<evidence type="ECO:0000250" key="1">
    <source>
        <dbReference type="UniProtKB" id="P03923"/>
    </source>
</evidence>
<evidence type="ECO:0000250" key="2">
    <source>
        <dbReference type="UniProtKB" id="P03924"/>
    </source>
</evidence>
<evidence type="ECO:0000255" key="3"/>
<evidence type="ECO:0000305" key="4"/>
<feature type="chain" id="PRO_0000118286" description="NADH-ubiquinone oxidoreductase chain 6">
    <location>
        <begin position="1"/>
        <end position="174"/>
    </location>
</feature>
<feature type="transmembrane region" description="Helical" evidence="3">
    <location>
        <begin position="1"/>
        <end position="21"/>
    </location>
</feature>
<feature type="transmembrane region" description="Helical" evidence="3">
    <location>
        <begin position="24"/>
        <end position="44"/>
    </location>
</feature>
<feature type="transmembrane region" description="Helical" evidence="3">
    <location>
        <begin position="47"/>
        <end position="67"/>
    </location>
</feature>
<feature type="transmembrane region" description="Helical" evidence="3">
    <location>
        <begin position="86"/>
        <end position="106"/>
    </location>
</feature>
<feature type="transmembrane region" description="Helical" evidence="3">
    <location>
        <begin position="151"/>
        <end position="171"/>
    </location>
</feature>
<name>NU6M_GORGO</name>
<keyword id="KW-0249">Electron transport</keyword>
<keyword id="KW-0472">Membrane</keyword>
<keyword id="KW-0496">Mitochondrion</keyword>
<keyword id="KW-0999">Mitochondrion inner membrane</keyword>
<keyword id="KW-0520">NAD</keyword>
<keyword id="KW-1185">Reference proteome</keyword>
<keyword id="KW-0679">Respiratory chain</keyword>
<keyword id="KW-1278">Translocase</keyword>
<keyword id="KW-0812">Transmembrane</keyword>
<keyword id="KW-1133">Transmembrane helix</keyword>
<keyword id="KW-0813">Transport</keyword>
<keyword id="KW-0830">Ubiquinone</keyword>
<reference key="1">
    <citation type="journal article" date="1995" name="Proc. Natl. Acad. Sci. U.S.A.">
        <title>Recent African origin of modern humans revealed by complete sequences of hominoid mitochondrial DNAs.</title>
        <authorList>
            <person name="Horai S."/>
            <person name="Hayasaka K."/>
            <person name="Kondo R."/>
            <person name="Tsugane K."/>
            <person name="Takahata N."/>
        </authorList>
    </citation>
    <scope>NUCLEOTIDE SEQUENCE [GENOMIC DNA]</scope>
</reference>
<organism>
    <name type="scientific">Gorilla gorilla gorilla</name>
    <name type="common">Western lowland gorilla</name>
    <dbReference type="NCBI Taxonomy" id="9595"/>
    <lineage>
        <taxon>Eukaryota</taxon>
        <taxon>Metazoa</taxon>
        <taxon>Chordata</taxon>
        <taxon>Craniata</taxon>
        <taxon>Vertebrata</taxon>
        <taxon>Euteleostomi</taxon>
        <taxon>Mammalia</taxon>
        <taxon>Eutheria</taxon>
        <taxon>Euarchontoglires</taxon>
        <taxon>Primates</taxon>
        <taxon>Haplorrhini</taxon>
        <taxon>Catarrhini</taxon>
        <taxon>Hominidae</taxon>
        <taxon>Gorilla</taxon>
    </lineage>
</organism>